<dbReference type="EC" id="5.1.3.1" evidence="1"/>
<dbReference type="EMBL" id="AL123456">
    <property type="protein sequence ID" value="CCP44167.1"/>
    <property type="status" value="ALT_INIT"/>
    <property type="molecule type" value="Genomic_DNA"/>
</dbReference>
<dbReference type="PIR" id="E70901">
    <property type="entry name" value="E70901"/>
</dbReference>
<dbReference type="RefSeq" id="NP_215924.1">
    <property type="nucleotide sequence ID" value="NC_000962.3"/>
</dbReference>
<dbReference type="SMR" id="P9WI51"/>
<dbReference type="FunCoup" id="P9WI51">
    <property type="interactions" value="452"/>
</dbReference>
<dbReference type="STRING" id="83332.Rv1408"/>
<dbReference type="PaxDb" id="83332-Rv1408"/>
<dbReference type="DNASU" id="886702"/>
<dbReference type="GeneID" id="886702"/>
<dbReference type="KEGG" id="mtu:Rv1408"/>
<dbReference type="PATRIC" id="fig|83332.12.peg.1573"/>
<dbReference type="TubercuList" id="Rv1408"/>
<dbReference type="eggNOG" id="COG0036">
    <property type="taxonomic scope" value="Bacteria"/>
</dbReference>
<dbReference type="InParanoid" id="P9WI51"/>
<dbReference type="OrthoDB" id="1645589at2"/>
<dbReference type="Proteomes" id="UP000001584">
    <property type="component" value="Chromosome"/>
</dbReference>
<dbReference type="GO" id="GO:0005829">
    <property type="term" value="C:cytosol"/>
    <property type="evidence" value="ECO:0000318"/>
    <property type="project" value="GO_Central"/>
</dbReference>
<dbReference type="GO" id="GO:0004750">
    <property type="term" value="F:D-ribulose-phosphate 3-epimerase activity"/>
    <property type="evidence" value="ECO:0000318"/>
    <property type="project" value="GO_Central"/>
</dbReference>
<dbReference type="GO" id="GO:0046872">
    <property type="term" value="F:metal ion binding"/>
    <property type="evidence" value="ECO:0000318"/>
    <property type="project" value="GO_Central"/>
</dbReference>
<dbReference type="GO" id="GO:0005975">
    <property type="term" value="P:carbohydrate metabolic process"/>
    <property type="evidence" value="ECO:0000318"/>
    <property type="project" value="GO_Central"/>
</dbReference>
<dbReference type="GO" id="GO:0019323">
    <property type="term" value="P:pentose catabolic process"/>
    <property type="evidence" value="ECO:0007669"/>
    <property type="project" value="UniProtKB-UniRule"/>
</dbReference>
<dbReference type="GO" id="GO:0009052">
    <property type="term" value="P:pentose-phosphate shunt, non-oxidative branch"/>
    <property type="evidence" value="ECO:0000318"/>
    <property type="project" value="GO_Central"/>
</dbReference>
<dbReference type="CDD" id="cd00429">
    <property type="entry name" value="RPE"/>
    <property type="match status" value="1"/>
</dbReference>
<dbReference type="FunFam" id="3.20.20.70:FF:000004">
    <property type="entry name" value="Ribulose-phosphate 3-epimerase"/>
    <property type="match status" value="1"/>
</dbReference>
<dbReference type="Gene3D" id="3.20.20.70">
    <property type="entry name" value="Aldolase class I"/>
    <property type="match status" value="1"/>
</dbReference>
<dbReference type="HAMAP" id="MF_02227">
    <property type="entry name" value="RPE"/>
    <property type="match status" value="1"/>
</dbReference>
<dbReference type="InterPro" id="IPR013785">
    <property type="entry name" value="Aldolase_TIM"/>
</dbReference>
<dbReference type="InterPro" id="IPR026019">
    <property type="entry name" value="Ribul_P_3_epim"/>
</dbReference>
<dbReference type="InterPro" id="IPR000056">
    <property type="entry name" value="Ribul_P_3_epim-like"/>
</dbReference>
<dbReference type="InterPro" id="IPR011060">
    <property type="entry name" value="RibuloseP-bd_barrel"/>
</dbReference>
<dbReference type="NCBIfam" id="NF004076">
    <property type="entry name" value="PRK05581.1-4"/>
    <property type="match status" value="1"/>
</dbReference>
<dbReference type="NCBIfam" id="TIGR01163">
    <property type="entry name" value="rpe"/>
    <property type="match status" value="1"/>
</dbReference>
<dbReference type="PANTHER" id="PTHR11749">
    <property type="entry name" value="RIBULOSE-5-PHOSPHATE-3-EPIMERASE"/>
    <property type="match status" value="1"/>
</dbReference>
<dbReference type="Pfam" id="PF00834">
    <property type="entry name" value="Ribul_P_3_epim"/>
    <property type="match status" value="1"/>
</dbReference>
<dbReference type="PIRSF" id="PIRSF001461">
    <property type="entry name" value="RPE"/>
    <property type="match status" value="1"/>
</dbReference>
<dbReference type="SUPFAM" id="SSF51366">
    <property type="entry name" value="Ribulose-phoshate binding barrel"/>
    <property type="match status" value="1"/>
</dbReference>
<dbReference type="PROSITE" id="PS01085">
    <property type="entry name" value="RIBUL_P_3_EPIMER_1"/>
    <property type="match status" value="1"/>
</dbReference>
<dbReference type="PROSITE" id="PS01086">
    <property type="entry name" value="RIBUL_P_3_EPIMER_2"/>
    <property type="match status" value="1"/>
</dbReference>
<accession>P9WI51</accession>
<accession>L0T6S4</accession>
<accession>P65760</accession>
<accession>P71676</accession>
<proteinExistence type="evidence at protein level"/>
<keyword id="KW-0119">Carbohydrate metabolism</keyword>
<keyword id="KW-0413">Isomerase</keyword>
<keyword id="KW-0479">Metal-binding</keyword>
<keyword id="KW-1185">Reference proteome</keyword>
<gene>
    <name evidence="1" type="primary">rpe</name>
    <name type="ordered locus">Rv1408</name>
    <name type="ORF">MTCY21B4.25</name>
</gene>
<feature type="chain" id="PRO_0000171578" description="Ribulose-phosphate 3-epimerase">
    <location>
        <begin position="1"/>
        <end position="229"/>
    </location>
</feature>
<feature type="active site" description="Proton acceptor" evidence="1">
    <location>
        <position position="38"/>
    </location>
</feature>
<feature type="active site" description="Proton donor" evidence="1">
    <location>
        <position position="178"/>
    </location>
</feature>
<feature type="binding site" evidence="1">
    <location>
        <position position="13"/>
    </location>
    <ligand>
        <name>substrate</name>
    </ligand>
</feature>
<feature type="binding site" evidence="1">
    <location>
        <position position="36"/>
    </location>
    <ligand>
        <name>a divalent metal cation</name>
        <dbReference type="ChEBI" id="CHEBI:60240"/>
    </ligand>
</feature>
<feature type="binding site" evidence="1">
    <location>
        <position position="38"/>
    </location>
    <ligand>
        <name>a divalent metal cation</name>
        <dbReference type="ChEBI" id="CHEBI:60240"/>
    </ligand>
</feature>
<feature type="binding site" evidence="1">
    <location>
        <position position="69"/>
    </location>
    <ligand>
        <name>a divalent metal cation</name>
        <dbReference type="ChEBI" id="CHEBI:60240"/>
    </ligand>
</feature>
<feature type="binding site" evidence="1">
    <location>
        <position position="69"/>
    </location>
    <ligand>
        <name>substrate</name>
    </ligand>
</feature>
<feature type="binding site" evidence="1">
    <location>
        <begin position="145"/>
        <end position="148"/>
    </location>
    <ligand>
        <name>substrate</name>
    </ligand>
</feature>
<feature type="binding site" evidence="1">
    <location>
        <begin position="178"/>
        <end position="180"/>
    </location>
    <ligand>
        <name>substrate</name>
    </ligand>
</feature>
<feature type="binding site" evidence="1">
    <location>
        <position position="178"/>
    </location>
    <ligand>
        <name>a divalent metal cation</name>
        <dbReference type="ChEBI" id="CHEBI:60240"/>
    </ligand>
</feature>
<feature type="binding site" evidence="1">
    <location>
        <begin position="200"/>
        <end position="201"/>
    </location>
    <ligand>
        <name>substrate</name>
    </ligand>
</feature>
<comment type="function">
    <text evidence="1">Catalyzes the reversible epimerization of D-ribulose 5-phosphate to D-xylulose 5-phosphate.</text>
</comment>
<comment type="catalytic activity">
    <reaction evidence="1">
        <text>D-ribulose 5-phosphate = D-xylulose 5-phosphate</text>
        <dbReference type="Rhea" id="RHEA:13677"/>
        <dbReference type="ChEBI" id="CHEBI:57737"/>
        <dbReference type="ChEBI" id="CHEBI:58121"/>
        <dbReference type="EC" id="5.1.3.1"/>
    </reaction>
</comment>
<comment type="cofactor">
    <cofactor evidence="1">
        <name>a divalent metal cation</name>
        <dbReference type="ChEBI" id="CHEBI:60240"/>
    </cofactor>
    <text evidence="1">Binds 1 divalent metal cation per subunit.</text>
</comment>
<comment type="pathway">
    <text evidence="1">Carbohydrate degradation.</text>
</comment>
<comment type="similarity">
    <text evidence="1">Belongs to the ribulose-phosphate 3-epimerase family.</text>
</comment>
<comment type="sequence caution" evidence="2">
    <conflict type="erroneous initiation">
        <sequence resource="EMBL-CDS" id="CCP44167"/>
    </conflict>
    <text>Extended N-terminus.</text>
</comment>
<evidence type="ECO:0000255" key="1">
    <source>
        <dbReference type="HAMAP-Rule" id="MF_02227"/>
    </source>
</evidence>
<evidence type="ECO:0000305" key="2"/>
<reference key="1">
    <citation type="journal article" date="1998" name="Nature">
        <title>Deciphering the biology of Mycobacterium tuberculosis from the complete genome sequence.</title>
        <authorList>
            <person name="Cole S.T."/>
            <person name="Brosch R."/>
            <person name="Parkhill J."/>
            <person name="Garnier T."/>
            <person name="Churcher C.M."/>
            <person name="Harris D.E."/>
            <person name="Gordon S.V."/>
            <person name="Eiglmeier K."/>
            <person name="Gas S."/>
            <person name="Barry C.E. III"/>
            <person name="Tekaia F."/>
            <person name="Badcock K."/>
            <person name="Basham D."/>
            <person name="Brown D."/>
            <person name="Chillingworth T."/>
            <person name="Connor R."/>
            <person name="Davies R.M."/>
            <person name="Devlin K."/>
            <person name="Feltwell T."/>
            <person name="Gentles S."/>
            <person name="Hamlin N."/>
            <person name="Holroyd S."/>
            <person name="Hornsby T."/>
            <person name="Jagels K."/>
            <person name="Krogh A."/>
            <person name="McLean J."/>
            <person name="Moule S."/>
            <person name="Murphy L.D."/>
            <person name="Oliver S."/>
            <person name="Osborne J."/>
            <person name="Quail M.A."/>
            <person name="Rajandream M.A."/>
            <person name="Rogers J."/>
            <person name="Rutter S."/>
            <person name="Seeger K."/>
            <person name="Skelton S."/>
            <person name="Squares S."/>
            <person name="Squares R."/>
            <person name="Sulston J.E."/>
            <person name="Taylor K."/>
            <person name="Whitehead S."/>
            <person name="Barrell B.G."/>
        </authorList>
    </citation>
    <scope>NUCLEOTIDE SEQUENCE [LARGE SCALE GENOMIC DNA]</scope>
    <source>
        <strain>ATCC 25618 / H37Rv</strain>
    </source>
</reference>
<reference key="2">
    <citation type="journal article" date="2011" name="Mol. Cell. Proteomics">
        <title>Proteogenomic analysis of Mycobacterium tuberculosis by high resolution mass spectrometry.</title>
        <authorList>
            <person name="Kelkar D.S."/>
            <person name="Kumar D."/>
            <person name="Kumar P."/>
            <person name="Balakrishnan L."/>
            <person name="Muthusamy B."/>
            <person name="Yadav A.K."/>
            <person name="Shrivastava P."/>
            <person name="Marimuthu A."/>
            <person name="Anand S."/>
            <person name="Sundaram H."/>
            <person name="Kingsbury R."/>
            <person name="Harsha H.C."/>
            <person name="Nair B."/>
            <person name="Prasad T.S."/>
            <person name="Chauhan D.S."/>
            <person name="Katoch K."/>
            <person name="Katoch V.M."/>
            <person name="Kumar P."/>
            <person name="Chaerkady R."/>
            <person name="Ramachandran S."/>
            <person name="Dash D."/>
            <person name="Pandey A."/>
        </authorList>
    </citation>
    <scope>IDENTIFICATION BY MASS SPECTROMETRY [LARGE SCALE ANALYSIS]</scope>
    <source>
        <strain>ATCC 25618 / H37Rv</strain>
    </source>
</reference>
<name>RPE_MYCTU</name>
<sequence>MAGSTGGPLIAPSILAADFARLADEAAAVNGADWLHVDVMDGHFVPNLTIGLPVVESLLAVTDIPMDCHLMIDNPDRWAPPYAEAGAYNVTFHAEATDNPVGVARDIRAAGAKAGISVKPGTPLEPYLDILPHFDTLLVMSVEPGFGGQRFIPEVLSKVRAVRKMVDAGELTILVEIDGGINDDTIEQAAEAGVDCFVAGSAVYGADDPAAAVAALRRQAGAASLHLSL</sequence>
<protein>
    <recommendedName>
        <fullName evidence="1">Ribulose-phosphate 3-epimerase</fullName>
        <ecNumber evidence="1">5.1.3.1</ecNumber>
    </recommendedName>
</protein>
<organism>
    <name type="scientific">Mycobacterium tuberculosis (strain ATCC 25618 / H37Rv)</name>
    <dbReference type="NCBI Taxonomy" id="83332"/>
    <lineage>
        <taxon>Bacteria</taxon>
        <taxon>Bacillati</taxon>
        <taxon>Actinomycetota</taxon>
        <taxon>Actinomycetes</taxon>
        <taxon>Mycobacteriales</taxon>
        <taxon>Mycobacteriaceae</taxon>
        <taxon>Mycobacterium</taxon>
        <taxon>Mycobacterium tuberculosis complex</taxon>
    </lineage>
</organism>